<keyword id="KW-0002">3D-structure</keyword>
<keyword id="KW-0007">Acetylation</keyword>
<keyword id="KW-0025">Alternative splicing</keyword>
<keyword id="KW-0058">Aromatic hydrocarbons catabolism</keyword>
<keyword id="KW-0963">Cytoplasm</keyword>
<keyword id="KW-0216">Detoxification</keyword>
<keyword id="KW-0903">Direct protein sequencing</keyword>
<keyword id="KW-0378">Hydrolase</keyword>
<keyword id="KW-0443">Lipid metabolism</keyword>
<keyword id="KW-0449">Lipoprotein</keyword>
<keyword id="KW-0460">Magnesium</keyword>
<keyword id="KW-0479">Metal-binding</keyword>
<keyword id="KW-0511">Multifunctional enzyme</keyword>
<keyword id="KW-0576">Peroxisome</keyword>
<keyword id="KW-0597">Phosphoprotein</keyword>
<keyword id="KW-1185">Reference proteome</keyword>
<gene>
    <name evidence="16" type="primary">Ephx2</name>
    <name type="synonym">Eph2</name>
</gene>
<proteinExistence type="evidence at protein level"/>
<evidence type="ECO:0000250" key="1"/>
<evidence type="ECO:0000250" key="2">
    <source>
        <dbReference type="UniProtKB" id="P34913"/>
    </source>
</evidence>
<evidence type="ECO:0000250" key="3">
    <source>
        <dbReference type="UniProtKB" id="P80299"/>
    </source>
</evidence>
<evidence type="ECO:0000255" key="4"/>
<evidence type="ECO:0000269" key="5">
    <source>
    </source>
</evidence>
<evidence type="ECO:0000269" key="6">
    <source>
    </source>
</evidence>
<evidence type="ECO:0000269" key="7">
    <source>
    </source>
</evidence>
<evidence type="ECO:0000269" key="8">
    <source>
    </source>
</evidence>
<evidence type="ECO:0000269" key="9">
    <source>
    </source>
</evidence>
<evidence type="ECO:0000269" key="10">
    <source>
    </source>
</evidence>
<evidence type="ECO:0000269" key="11">
    <source>
    </source>
</evidence>
<evidence type="ECO:0000303" key="12">
    <source>
    </source>
</evidence>
<evidence type="ECO:0000303" key="13">
    <source>
    </source>
</evidence>
<evidence type="ECO:0000305" key="14"/>
<evidence type="ECO:0000305" key="15">
    <source>
    </source>
</evidence>
<evidence type="ECO:0000312" key="16">
    <source>
        <dbReference type="MGI" id="MGI:99500"/>
    </source>
</evidence>
<evidence type="ECO:0007744" key="17">
    <source>
    </source>
</evidence>
<evidence type="ECO:0007744" key="18">
    <source>
    </source>
</evidence>
<evidence type="ECO:0007744" key="19">
    <source>
    </source>
</evidence>
<evidence type="ECO:0007744" key="20">
    <source>
    </source>
</evidence>
<evidence type="ECO:0007829" key="21">
    <source>
        <dbReference type="PDB" id="1CQZ"/>
    </source>
</evidence>
<evidence type="ECO:0007829" key="22">
    <source>
        <dbReference type="PDB" id="1CR6"/>
    </source>
</evidence>
<evidence type="ECO:0007829" key="23">
    <source>
        <dbReference type="PDB" id="1EK1"/>
    </source>
</evidence>
<evidence type="ECO:0007829" key="24">
    <source>
        <dbReference type="PDB" id="1EK2"/>
    </source>
</evidence>
<protein>
    <recommendedName>
        <fullName evidence="14">Bifunctional epoxide hydrolase 2</fullName>
    </recommendedName>
    <domain>
        <recommendedName>
            <fullName>Cytosolic epoxide hydrolase 2</fullName>
            <shortName>CEH</shortName>
            <ecNumber evidence="8">3.3.2.10</ecNumber>
        </recommendedName>
        <alternativeName>
            <fullName>Epoxide hydratase</fullName>
        </alternativeName>
        <alternativeName>
            <fullName evidence="13">Soluble epoxide hydrolase</fullName>
            <shortName evidence="13">SEH</shortName>
        </alternativeName>
    </domain>
    <domain>
        <recommendedName>
            <fullName>Lipid-phosphate phosphatase</fullName>
            <ecNumber evidence="2">3.1.3.76</ecNumber>
        </recommendedName>
    </domain>
</protein>
<sequence length="554" mass="62515">MALRVAAFDLDGVLALPSIAGAFRRSEEALALPRDFLLGAYQTEFPEGPTEQLMKGKITFSQWVPLMDESYRKSSKACGANLPENFSISQIFSQAMAARSINRPMLQAAIALKKKGFTTCIVTNNWLDDGDKRDSLAQMMCELSQHFDFLIESCQVGMIKPEPQIYNFLLDTLKAKPNEVVFLDDFGSNLKPARDMGMVTILVHNTASALRELEKVTGTQFPEAPLPVPCNPNDVSHGYVTVKPGIRLHFVEMGSGPALCLCHGFPESWFSWRYQIPALAQAGFRVLAIDMKGYGDSSSPPEIEEYAMELLCKEMVTFLDKLGIPQAVFIGHDWAGVMVWNMALFYPERVRAVASLNTPFMPPDPDVSPMKVIRSIPVFNYQLYFQEPGVAEAELEKNMSRTFKSFFRASDETGFIAVHKATEIGGILVNTPEDPNLSKITTEEEIEFYIQQFKKTGFRGPLNWYRNTERNWKWSCKGLGRKILVPALMVTAEKDIVLRPEMSKNMEKWIPFLKRGHIEDCGHWTQIEKPTEVNQILIKWLQTEVQNPSVTSKI</sequence>
<accession>P34914</accession>
<accession>Q8CGV0</accession>
<comment type="function">
    <text evidence="2 3 8 9">Bifunctional enzyme. The C-terminal domain has epoxide hydrolase activity and acts on epoxides (alkene oxides, oxiranes) and arene oxides (PubMed:21217101, PubMed:7840649). Plays a role in xenobiotic metabolism by degrading potentially toxic epoxides (By similarity). Also determines steady-state levels of physiological mediators (By similarity).</text>
</comment>
<comment type="function">
    <text evidence="2">Bifunctional enzyme. The N-terminal domain has lipid phosphatase activity, with the highest activity towards threo-9,10-phosphonooxy-hydroxy-octadecanoic acid, followed by erythro-9,10-phosphonooxy-hydroxy-octadecanoic acid, 12-phosphonooxy-octadec-9Z-enoic acid and 12-phosphonooxy-octadec-9E-enoic acid (By similarity). Has phosphatase activity toward lyso-glycerophospholipids with also some lower activity toward lysolipids of sphingolipid and isoprenoid phosphates (By similarity).</text>
</comment>
<comment type="catalytic activity">
    <reaction evidence="2">
        <text>an epoxide + H2O = an ethanediol</text>
        <dbReference type="Rhea" id="RHEA:19037"/>
        <dbReference type="ChEBI" id="CHEBI:15377"/>
        <dbReference type="ChEBI" id="CHEBI:32955"/>
        <dbReference type="ChEBI" id="CHEBI:140594"/>
        <dbReference type="EC" id="3.3.2.10"/>
    </reaction>
</comment>
<comment type="catalytic activity">
    <reaction evidence="2">
        <text>(9S,10S)-10-hydroxy-9-(phosphooxy)octadecanoate + H2O = (9S,10S)-9,10-dihydroxyoctadecanoate + phosphate</text>
        <dbReference type="Rhea" id="RHEA:16537"/>
        <dbReference type="ChEBI" id="CHEBI:15377"/>
        <dbReference type="ChEBI" id="CHEBI:43474"/>
        <dbReference type="ChEBI" id="CHEBI:58796"/>
        <dbReference type="ChEBI" id="CHEBI:58797"/>
        <dbReference type="EC" id="3.1.3.76"/>
    </reaction>
</comment>
<comment type="catalytic activity">
    <reaction evidence="8">
        <text>8-hydroxy-(11S,12S)-epoxy-(5Z,9E,14Z)-eicosatrienoate + H2O = (8,11R,12S)-trihydroxy-(5Z,9E,14Z)-eicosatrienoate</text>
        <dbReference type="Rhea" id="RHEA:50896"/>
        <dbReference type="ChEBI" id="CHEBI:15377"/>
        <dbReference type="ChEBI" id="CHEBI:78100"/>
        <dbReference type="ChEBI" id="CHEBI:132127"/>
    </reaction>
    <physiologicalReaction direction="left-to-right" evidence="8">
        <dbReference type="Rhea" id="RHEA:50897"/>
    </physiologicalReaction>
</comment>
<comment type="catalytic activity">
    <reaction evidence="8">
        <text>10-hydroxy-(11S,12S)-epoxy- (5Z,8Z,14Z)-eicosatrienoate + H2O = (10,11S,12R)-trihydroxy-(5Z,8Z,14Z)-eicosatrienoate</text>
        <dbReference type="Rhea" id="RHEA:50900"/>
        <dbReference type="ChEBI" id="CHEBI:15377"/>
        <dbReference type="ChEBI" id="CHEBI:78084"/>
        <dbReference type="ChEBI" id="CHEBI:78099"/>
    </reaction>
    <physiologicalReaction direction="left-to-right" evidence="8">
        <dbReference type="Rhea" id="RHEA:50901"/>
    </physiologicalReaction>
</comment>
<comment type="catalytic activity">
    <reaction evidence="9">
        <text>(8S,9R)-epoxy-(5Z,11Z,14Z)-eicosatrienoate + H2O = (8S,9S)-dihydroxy-(5Z,11Z,14Z)-eicosatrienoate</text>
        <dbReference type="Rhea" id="RHEA:53972"/>
        <dbReference type="ChEBI" id="CHEBI:15377"/>
        <dbReference type="ChEBI" id="CHEBI:131974"/>
        <dbReference type="ChEBI" id="CHEBI:138002"/>
    </reaction>
    <physiologicalReaction direction="left-to-right" evidence="15">
        <dbReference type="Rhea" id="RHEA:53973"/>
    </physiologicalReaction>
</comment>
<comment type="catalytic activity">
    <reaction evidence="9">
        <text>(11S,12R)-epoxy-(5Z,8Z,14Z)-eicosatrienoate + H2O = (11R,12R)-dihydroxy-(5Z,8Z,14Z)-eicosatrienoate</text>
        <dbReference type="Rhea" id="RHEA:53980"/>
        <dbReference type="ChEBI" id="CHEBI:15377"/>
        <dbReference type="ChEBI" id="CHEBI:131969"/>
        <dbReference type="ChEBI" id="CHEBI:138004"/>
    </reaction>
    <physiologicalReaction direction="left-to-right" evidence="15">
        <dbReference type="Rhea" id="RHEA:53981"/>
    </physiologicalReaction>
</comment>
<comment type="catalytic activity">
    <reaction evidence="9">
        <text>(11S,12R)-epoxy-(5Z,8Z,14Z)-eicosatrienoate + H2O = (11S,12S)-dihydroxy-(5Z,8Z,14Z)-eicosatrienoate</text>
        <dbReference type="Rhea" id="RHEA:53984"/>
        <dbReference type="ChEBI" id="CHEBI:15377"/>
        <dbReference type="ChEBI" id="CHEBI:131969"/>
        <dbReference type="ChEBI" id="CHEBI:138005"/>
    </reaction>
    <physiologicalReaction direction="left-to-right" evidence="15">
        <dbReference type="Rhea" id="RHEA:53985"/>
    </physiologicalReaction>
</comment>
<comment type="catalytic activity">
    <reaction evidence="9">
        <text>(14S,15R)-epoxy-(5Z,8Z,11Z)-eicosatrienoate + H2O = (14R,15R)-dihydroxy-(5Z,8Z,11Z)-eicosatrienoate</text>
        <dbReference type="Rhea" id="RHEA:53992"/>
        <dbReference type="ChEBI" id="CHEBI:15377"/>
        <dbReference type="ChEBI" id="CHEBI:131964"/>
        <dbReference type="ChEBI" id="CHEBI:138003"/>
    </reaction>
    <physiologicalReaction direction="left-to-right" evidence="15">
        <dbReference type="Rhea" id="RHEA:53993"/>
    </physiologicalReaction>
</comment>
<comment type="catalytic activity">
    <reaction evidence="9">
        <text>(14S,15R)-epoxy-(5Z,8Z,11Z)-eicosatrienoate + H2O = (14S,15S)-dihydroxy-(5Z,8Z,11Z)-eicosatrienoate</text>
        <dbReference type="Rhea" id="RHEA:53996"/>
        <dbReference type="ChEBI" id="CHEBI:15377"/>
        <dbReference type="ChEBI" id="CHEBI:131964"/>
        <dbReference type="ChEBI" id="CHEBI:138006"/>
    </reaction>
    <physiologicalReaction direction="left-to-right" evidence="15">
        <dbReference type="Rhea" id="RHEA:53997"/>
    </physiologicalReaction>
</comment>
<comment type="catalytic activity">
    <reaction evidence="9">
        <text>(11R,12S)-epoxy-(5Z,8Z,14Z)-eicosatrienoate + H2O = (11S,12S)-dihydroxy-(5Z,8Z,14Z)-eicosatrienoate</text>
        <dbReference type="Rhea" id="RHEA:54004"/>
        <dbReference type="ChEBI" id="CHEBI:15377"/>
        <dbReference type="ChEBI" id="CHEBI:131970"/>
        <dbReference type="ChEBI" id="CHEBI:138005"/>
    </reaction>
    <physiologicalReaction direction="left-to-right" evidence="15">
        <dbReference type="Rhea" id="RHEA:54005"/>
    </physiologicalReaction>
</comment>
<comment type="catalytic activity">
    <reaction evidence="9">
        <text>(11R,12S)-epoxy-(5Z,8Z,14Z)-eicosatrienoate + H2O = (11R,12R)-dihydroxy-(5Z,8Z,14Z)-eicosatrienoate</text>
        <dbReference type="Rhea" id="RHEA:54000"/>
        <dbReference type="ChEBI" id="CHEBI:15377"/>
        <dbReference type="ChEBI" id="CHEBI:131970"/>
        <dbReference type="ChEBI" id="CHEBI:138004"/>
    </reaction>
    <physiologicalReaction direction="left-to-right" evidence="15">
        <dbReference type="Rhea" id="RHEA:54001"/>
    </physiologicalReaction>
</comment>
<comment type="catalytic activity">
    <reaction evidence="9">
        <text>(8S,9R)-epoxy-(5Z,11Z,14Z)-eicosatrienoate + H2O = (8R,9R)-dihydroxy-(5Z,11Z,14Z)-eicosatrienoate</text>
        <dbReference type="Rhea" id="RHEA:54016"/>
        <dbReference type="ChEBI" id="CHEBI:15377"/>
        <dbReference type="ChEBI" id="CHEBI:131974"/>
        <dbReference type="ChEBI" id="CHEBI:138008"/>
    </reaction>
    <physiologicalReaction direction="left-to-right" evidence="15">
        <dbReference type="Rhea" id="RHEA:54017"/>
    </physiologicalReaction>
</comment>
<comment type="catalytic activity">
    <reaction evidence="2">
        <text>12-phosphooxy-(9Z)-octadecenoate + H2O = 12-hydroxy-(9Z)-octadecenoate + phosphate</text>
        <dbReference type="Rhea" id="RHEA:45272"/>
        <dbReference type="ChEBI" id="CHEBI:15377"/>
        <dbReference type="ChEBI" id="CHEBI:43474"/>
        <dbReference type="ChEBI" id="CHEBI:85141"/>
        <dbReference type="ChEBI" id="CHEBI:85150"/>
    </reaction>
    <physiologicalReaction direction="left-to-right" evidence="2">
        <dbReference type="Rhea" id="RHEA:45273"/>
    </physiologicalReaction>
</comment>
<comment type="catalytic activity">
    <reaction evidence="2">
        <text>12-phosphooxy-(9E)-octadecenoate + H2O = 12-hydroxy-(9E)-octadecenoate + phosphate</text>
        <dbReference type="Rhea" id="RHEA:45276"/>
        <dbReference type="ChEBI" id="CHEBI:15377"/>
        <dbReference type="ChEBI" id="CHEBI:43474"/>
        <dbReference type="ChEBI" id="CHEBI:85137"/>
        <dbReference type="ChEBI" id="CHEBI:85152"/>
    </reaction>
    <physiologicalReaction direction="left-to-right" evidence="2">
        <dbReference type="Rhea" id="RHEA:45277"/>
    </physiologicalReaction>
</comment>
<comment type="catalytic activity">
    <reaction evidence="2">
        <text>12-(phosphooxy)octadecanoate + H2O = 12-hydroxyoctadecanoate + phosphate</text>
        <dbReference type="Rhea" id="RHEA:45280"/>
        <dbReference type="ChEBI" id="CHEBI:15377"/>
        <dbReference type="ChEBI" id="CHEBI:43474"/>
        <dbReference type="ChEBI" id="CHEBI:84201"/>
        <dbReference type="ChEBI" id="CHEBI:85134"/>
    </reaction>
    <physiologicalReaction direction="left-to-right" evidence="2">
        <dbReference type="Rhea" id="RHEA:45281"/>
    </physiologicalReaction>
</comment>
<comment type="catalytic activity">
    <reaction evidence="2">
        <text>8,9-epoxy-(5Z,11Z,14Z)-eicosatrienoate + H2O = 8,9-dihydroxy-(5Z,11Z,14Z)-eicosatrienoate</text>
        <dbReference type="Rhea" id="RHEA:44048"/>
        <dbReference type="ChEBI" id="CHEBI:15377"/>
        <dbReference type="ChEBI" id="CHEBI:84025"/>
        <dbReference type="ChEBI" id="CHEBI:84032"/>
    </reaction>
    <physiologicalReaction direction="left-to-right" evidence="2">
        <dbReference type="Rhea" id="RHEA:44049"/>
    </physiologicalReaction>
</comment>
<comment type="catalytic activity">
    <reaction evidence="2">
        <text>11,12-epoxy-(5Z,8Z,14Z)-eicosatrienoate + H2O = 11,12-dihydroxy-(5Z,8Z,14Z)-eicosatrienoate</text>
        <dbReference type="Rhea" id="RHEA:44044"/>
        <dbReference type="ChEBI" id="CHEBI:15377"/>
        <dbReference type="ChEBI" id="CHEBI:76625"/>
        <dbReference type="ChEBI" id="CHEBI:84031"/>
    </reaction>
    <physiologicalReaction direction="left-to-right" evidence="2">
        <dbReference type="Rhea" id="RHEA:44045"/>
    </physiologicalReaction>
</comment>
<comment type="catalytic activity">
    <reaction evidence="2">
        <text>14,15-epoxy-(5Z,8Z,11Z)-eicosatrienoate + H2O = 14,15-dihydroxy-(5Z,8Z,11Z)-eicosatrienoate</text>
        <dbReference type="Rhea" id="RHEA:44040"/>
        <dbReference type="ChEBI" id="CHEBI:15377"/>
        <dbReference type="ChEBI" id="CHEBI:84024"/>
        <dbReference type="ChEBI" id="CHEBI:84029"/>
    </reaction>
    <physiologicalReaction direction="left-to-right" evidence="2">
        <dbReference type="Rhea" id="RHEA:44041"/>
    </physiologicalReaction>
</comment>
<comment type="catalytic activity">
    <reaction evidence="2">
        <text>9,10-epoxy-(12Z)-octadecenoate + H2O = 9,10-dihydroxy-(12Z)-octadecenoate</text>
        <dbReference type="Rhea" id="RHEA:44032"/>
        <dbReference type="ChEBI" id="CHEBI:15377"/>
        <dbReference type="ChEBI" id="CHEBI:84023"/>
        <dbReference type="ChEBI" id="CHEBI:84027"/>
    </reaction>
    <physiologicalReaction direction="left-to-right" evidence="2">
        <dbReference type="Rhea" id="RHEA:44033"/>
    </physiologicalReaction>
</comment>
<comment type="catalytic activity">
    <reaction evidence="2">
        <text>1-tetradecanoyl-sn-glycerol 3-phosphate + H2O = 1-tetradecanoyl-sn-glycerol + phosphate</text>
        <dbReference type="Rhea" id="RHEA:53592"/>
        <dbReference type="ChEBI" id="CHEBI:15377"/>
        <dbReference type="ChEBI" id="CHEBI:43474"/>
        <dbReference type="ChEBI" id="CHEBI:72683"/>
        <dbReference type="ChEBI" id="CHEBI:75536"/>
    </reaction>
    <physiologicalReaction direction="left-to-right" evidence="2">
        <dbReference type="Rhea" id="RHEA:53593"/>
    </physiologicalReaction>
</comment>
<comment type="catalytic activity">
    <reaction evidence="2">
        <text>1-octadecanoyl-sn-glycero-3-phosphate + H2O = 1-octadecanoyl-sn-glycerol + phosphate</text>
        <dbReference type="Rhea" id="RHEA:53596"/>
        <dbReference type="ChEBI" id="CHEBI:15377"/>
        <dbReference type="ChEBI" id="CHEBI:43474"/>
        <dbReference type="ChEBI" id="CHEBI:74565"/>
        <dbReference type="ChEBI" id="CHEBI:75550"/>
    </reaction>
    <physiologicalReaction direction="left-to-right" evidence="2">
        <dbReference type="Rhea" id="RHEA:53597"/>
    </physiologicalReaction>
</comment>
<comment type="catalytic activity">
    <reaction evidence="2">
        <text>1-(5Z,8Z,11Z,14Z-eicosatetraenoyl)-sn-glycero-3-phosphate + H2O = 1-(5Z,8Z,11Z,14Z-eicosatetraenoyl)-sn-glycerol + phosphate</text>
        <dbReference type="Rhea" id="RHEA:53600"/>
        <dbReference type="ChEBI" id="CHEBI:15377"/>
        <dbReference type="ChEBI" id="CHEBI:34071"/>
        <dbReference type="ChEBI" id="CHEBI:43474"/>
        <dbReference type="ChEBI" id="CHEBI:74938"/>
    </reaction>
    <physiologicalReaction direction="left-to-right" evidence="2">
        <dbReference type="Rhea" id="RHEA:53601"/>
    </physiologicalReaction>
</comment>
<comment type="catalytic activity">
    <reaction evidence="2">
        <text>1-hexadecanoyl-sn-glycero-3-phosphate + H2O = 1-hexadecanoyl-sn-glycerol + phosphate</text>
        <dbReference type="Rhea" id="RHEA:53604"/>
        <dbReference type="ChEBI" id="CHEBI:15377"/>
        <dbReference type="ChEBI" id="CHEBI:43474"/>
        <dbReference type="ChEBI" id="CHEBI:57518"/>
        <dbReference type="ChEBI" id="CHEBI:75542"/>
    </reaction>
    <physiologicalReaction direction="left-to-right" evidence="2">
        <dbReference type="Rhea" id="RHEA:53605"/>
    </physiologicalReaction>
</comment>
<comment type="catalytic activity">
    <reaction evidence="2">
        <text>1-(9Z-octadecenoyl)-sn-glycero-3-phosphate + H2O = 1-(9Z-octadecenoyl)-sn-glycerol + phosphate</text>
        <dbReference type="Rhea" id="RHEA:39835"/>
        <dbReference type="ChEBI" id="CHEBI:15377"/>
        <dbReference type="ChEBI" id="CHEBI:43474"/>
        <dbReference type="ChEBI" id="CHEBI:74544"/>
        <dbReference type="ChEBI" id="CHEBI:75757"/>
    </reaction>
    <physiologicalReaction direction="left-to-right" evidence="2">
        <dbReference type="Rhea" id="RHEA:39836"/>
    </physiologicalReaction>
</comment>
<comment type="catalytic activity">
    <reaction evidence="9">
        <text>(14R,15S)-epoxy-(5Z,8Z,11Z)-eicosatrienoate + H2O = (14R,15R)-dihydroxy-(5Z,8Z,11Z)-eicosatrienoate</text>
        <dbReference type="Rhea" id="RHEA:53976"/>
        <dbReference type="ChEBI" id="CHEBI:15377"/>
        <dbReference type="ChEBI" id="CHEBI:131965"/>
        <dbReference type="ChEBI" id="CHEBI:138003"/>
    </reaction>
    <physiologicalReaction direction="left-to-right" evidence="15">
        <dbReference type="Rhea" id="RHEA:53977"/>
    </physiologicalReaction>
</comment>
<comment type="cofactor">
    <cofactor evidence="2">
        <name>Mg(2+)</name>
        <dbReference type="ChEBI" id="CHEBI:18420"/>
    </cofactor>
</comment>
<comment type="activity regulation">
    <text evidence="2 8">Inhibited by 1-(1-acetylpiperidin-4-yl)-3-(4-(trifl uoromethoxy)phenyl)urea (TPAU), 1-cyclohexyl-3-dodecylurea (CDU), 12-(3-adamantan-1-yl-ureido)-dodecanoic acid (AUDA), 1-((3S, 5S, 7S)-adamantan-1-yl)-3-(5-(2-(2-ethoxyethoxy) ethoxy)pentyl)urea (AEPU), N-adamantyl-N[']-cyclohexyl urea (ACU), 4-(((1S, 4S)-4-(3-((3S, 5S, 7S)-adamantan-1-yl) ureido)cyclohexyl)oxy)benzoic acid (c-AUCB), 4-(((1R, 4R)-4-(3-((3S, 5S, 7S)-adamantan-1-yl)ureido)cyclohexyl)oxy)benzoic acid (t-AUCB), 4-(((1R, 4R)-4-(3-(4(trifluoromethoxy)phenyl)ureido)cyclohexyl)oxy)benzoic acid (t-TAUCB) and to a lesser extent by 8-(3-((3S, 5S, 7S)-adamantan-1-yl)ureido) octanoic acid (AUOA) (By similarity). Phosphatase activity is inhibited by dodecyl-phosphate, phospholipids such as phospho-lysophosphatidic acids and fatty acids such as palmitic acid and lauric acid (PubMed:21217101).</text>
</comment>
<comment type="biophysicochemical properties">
    <kinetics>
        <KM evidence="9">4 uM for 14(R),15(S)-EET</KM>
        <KM evidence="9">5 uM for 14(S),15(R)-EET</KM>
        <KM evidence="9">3 uM for 11(R),12(R)-EET</KM>
        <KM evidence="9">4 uM for 11(S),12(R)-EET</KM>
        <KM evidence="9">41 uM for 8(R),9(S)-EET</KM>
        <KM evidence="9">5 uM for 8(S),9(R)-EET</KM>
        <Vmax evidence="9">9.03 umol/min/mg enzyme with 14(R),15(S)-EET as substrate</Vmax>
        <Vmax evidence="9">1.36 umol/min/mg enzyme with 14(S),15(R)-EET as substrate</Vmax>
        <Vmax evidence="9">0.82 umol/min/mg enzyme with 11(R),12(R)-EET as substrate</Vmax>
        <Vmax evidence="9">3.02 umol/min/mg enzyme with 11(S),12(R)-EET as substrate</Vmax>
        <Vmax evidence="9">0.83 umol/min/mg enzyme with 8(R),9(S)-EET as substrate</Vmax>
        <Vmax evidence="9">3.1 umol/min/mg enzyme with 8(S),9(R)-EET as substrate</Vmax>
    </kinetics>
</comment>
<comment type="subunit">
    <text evidence="6 8">Homodimer.</text>
</comment>
<comment type="subcellular location">
    <subcellularLocation>
        <location evidence="8 9">Cytoplasm</location>
    </subcellularLocation>
    <subcellularLocation>
        <location>Peroxisome</location>
    </subcellularLocation>
</comment>
<comment type="alternative products">
    <event type="alternative splicing"/>
    <isoform>
        <id>P34914-1</id>
        <name>1</name>
        <name>Ephx2A</name>
        <sequence type="displayed"/>
    </isoform>
    <isoform>
        <id>P34914-2</id>
        <name>2</name>
        <name>Ephx2B</name>
        <sequence type="described" ref="VSP_013904"/>
    </isoform>
</comment>
<comment type="tissue specificity">
    <text evidence="7 8 9 11">Detected in liver, intestine, ovary and kidney. Detected at low levels in heart and muscle.</text>
</comment>
<comment type="induction">
    <text evidence="7 10 11">Up-regulated during the luteal phase of the stimulated estrus cycle and by compounds that cause peroxisome proliferation, such as clofibrate, tiadenol and fenofibrate.</text>
</comment>
<comment type="domain">
    <text>The N-terminal domain has phosphatase activity. The C-terminal domain has epoxide hydrolase activity.</text>
</comment>
<comment type="PTM">
    <text>The N-terminus is blocked.</text>
</comment>
<comment type="PTM">
    <text evidence="1">The covalent modification of cysteine by 15-deoxy-Delta12,14-prostaglandin-J2 is autocatalytic and reversible. It may occur as an alternative to other cysteine modifications, such as S-nitrosylation and S-palmitoylation (By similarity).</text>
</comment>
<comment type="disruption phenotype">
    <text evidence="8">In knockout mice, hepoxilin turnover to trioxilins is greatly abolished (PubMed:21217101). In livers, the activity toward HxA3 (8-hydroxy-(11S,12S)-epoxy-(5Z,9E,14Z)-eicosatrienoate) and HxB3 (10-hydroxy-(11S,12S)-epoxy- (5Z,8Z,14Z)-eicosatrienoate) is greatly reduced compared with the WT mice (PubMed:21217101).</text>
</comment>
<comment type="similarity">
    <text evidence="14">Belongs to the AB hydrolase superfamily. Epoxide hydrolase family.</text>
</comment>
<dbReference type="EC" id="3.3.2.10" evidence="8"/>
<dbReference type="EC" id="3.1.3.76" evidence="2"/>
<dbReference type="EMBL" id="L05781">
    <property type="protein sequence ID" value="AAA37555.1"/>
    <property type="molecule type" value="mRNA"/>
</dbReference>
<dbReference type="EMBL" id="Z37107">
    <property type="protein sequence ID" value="CAA85471.1"/>
    <property type="molecule type" value="mRNA"/>
</dbReference>
<dbReference type="EMBL" id="AY098585">
    <property type="protein sequence ID" value="AAM28238.1"/>
    <property type="molecule type" value="mRNA"/>
</dbReference>
<dbReference type="EMBL" id="BC015087">
    <property type="protein sequence ID" value="AAH15087.1"/>
    <property type="molecule type" value="mRNA"/>
</dbReference>
<dbReference type="CCDS" id="CCDS27218.1">
    <molecule id="P34914-1"/>
</dbReference>
<dbReference type="CCDS" id="CCDS88694.1">
    <molecule id="P34914-2"/>
</dbReference>
<dbReference type="PIR" id="A47504">
    <property type="entry name" value="A47504"/>
</dbReference>
<dbReference type="RefSeq" id="NP_001258332.1">
    <molecule id="P34914-2"/>
    <property type="nucleotide sequence ID" value="NM_001271403.1"/>
</dbReference>
<dbReference type="RefSeq" id="NP_031966.2">
    <molecule id="P34914-1"/>
    <property type="nucleotide sequence ID" value="NM_007940.4"/>
</dbReference>
<dbReference type="PDB" id="1CQZ">
    <property type="method" value="X-ray"/>
    <property type="resolution" value="2.80 A"/>
    <property type="chains" value="A/B=1-554"/>
</dbReference>
<dbReference type="PDB" id="1CR6">
    <property type="method" value="X-ray"/>
    <property type="resolution" value="2.80 A"/>
    <property type="chains" value="A/B=1-554"/>
</dbReference>
<dbReference type="PDB" id="1EK1">
    <property type="method" value="X-ray"/>
    <property type="resolution" value="3.10 A"/>
    <property type="chains" value="A/B=1-554"/>
</dbReference>
<dbReference type="PDB" id="1EK2">
    <property type="method" value="X-ray"/>
    <property type="resolution" value="3.00 A"/>
    <property type="chains" value="A/B=1-554"/>
</dbReference>
<dbReference type="PDBsum" id="1CQZ"/>
<dbReference type="PDBsum" id="1CR6"/>
<dbReference type="PDBsum" id="1EK1"/>
<dbReference type="PDBsum" id="1EK2"/>
<dbReference type="SMR" id="P34914"/>
<dbReference type="BioGRID" id="199481">
    <property type="interactions" value="4"/>
</dbReference>
<dbReference type="FunCoup" id="P34914">
    <property type="interactions" value="1012"/>
</dbReference>
<dbReference type="IntAct" id="P34914">
    <property type="interactions" value="3"/>
</dbReference>
<dbReference type="MINT" id="P34914"/>
<dbReference type="STRING" id="10090.ENSMUSP00000069209"/>
<dbReference type="BindingDB" id="P34914"/>
<dbReference type="ChEMBL" id="CHEMBL4140"/>
<dbReference type="DrugCentral" id="P34914"/>
<dbReference type="GuidetoPHARMACOLOGY" id="2970"/>
<dbReference type="SwissLipids" id="SLP:000001106"/>
<dbReference type="ESTHER" id="mouse-hyes">
    <property type="family name" value="Epoxide_hydrolase"/>
</dbReference>
<dbReference type="MEROPS" id="S33.973"/>
<dbReference type="GlyGen" id="P34914">
    <property type="glycosylation" value="2 sites, 1 O-linked glycan (1 site)"/>
</dbReference>
<dbReference type="iPTMnet" id="P34914"/>
<dbReference type="MetOSite" id="P34914"/>
<dbReference type="PhosphoSitePlus" id="P34914"/>
<dbReference type="SwissPalm" id="P34914"/>
<dbReference type="jPOST" id="P34914"/>
<dbReference type="PaxDb" id="10090-ENSMUSP00000069209"/>
<dbReference type="PeptideAtlas" id="P34914"/>
<dbReference type="ProteomicsDB" id="267029">
    <molecule id="P34914-1"/>
</dbReference>
<dbReference type="ProteomicsDB" id="267030">
    <molecule id="P34914-2"/>
</dbReference>
<dbReference type="Pumba" id="P34914"/>
<dbReference type="Antibodypedia" id="4070">
    <property type="antibodies" value="434 antibodies from 34 providers"/>
</dbReference>
<dbReference type="DNASU" id="13850"/>
<dbReference type="Ensembl" id="ENSMUST00000070515.2">
    <molecule id="P34914-1"/>
    <property type="protein sequence ID" value="ENSMUSP00000069209.2"/>
    <property type="gene ID" value="ENSMUSG00000022040.9"/>
</dbReference>
<dbReference type="Ensembl" id="ENSMUST00000224698.2">
    <molecule id="P34914-2"/>
    <property type="protein sequence ID" value="ENSMUSP00000153161.2"/>
    <property type="gene ID" value="ENSMUSG00000022040.9"/>
</dbReference>
<dbReference type="GeneID" id="13850"/>
<dbReference type="KEGG" id="mmu:13850"/>
<dbReference type="UCSC" id="uc007ujv.2">
    <molecule id="P34914-1"/>
    <property type="organism name" value="mouse"/>
</dbReference>
<dbReference type="UCSC" id="uc033grp.1">
    <molecule id="P34914-2"/>
    <property type="organism name" value="mouse"/>
</dbReference>
<dbReference type="AGR" id="MGI:99500"/>
<dbReference type="CTD" id="2053"/>
<dbReference type="MGI" id="MGI:99500">
    <property type="gene designation" value="Ephx2"/>
</dbReference>
<dbReference type="VEuPathDB" id="HostDB:ENSMUSG00000022040"/>
<dbReference type="eggNOG" id="KOG3085">
    <property type="taxonomic scope" value="Eukaryota"/>
</dbReference>
<dbReference type="eggNOG" id="KOG4178">
    <property type="taxonomic scope" value="Eukaryota"/>
</dbReference>
<dbReference type="GeneTree" id="ENSGT00940000158614"/>
<dbReference type="HOGENOM" id="CLU_036085_1_1_1"/>
<dbReference type="InParanoid" id="P34914"/>
<dbReference type="OMA" id="YAMEVLC"/>
<dbReference type="OrthoDB" id="408373at2759"/>
<dbReference type="PhylomeDB" id="P34914"/>
<dbReference type="TreeFam" id="TF315395"/>
<dbReference type="BRENDA" id="3.3.2.10">
    <property type="organism ID" value="3474"/>
</dbReference>
<dbReference type="Reactome" id="R-MMU-2142670">
    <property type="pathway name" value="Synthesis of epoxy (EET) and dihydroxyeicosatrienoic acids (DHET)"/>
</dbReference>
<dbReference type="Reactome" id="R-MMU-9018682">
    <property type="pathway name" value="Biosynthesis of maresins"/>
</dbReference>
<dbReference type="Reactome" id="R-MMU-9033241">
    <property type="pathway name" value="Peroxisomal protein import"/>
</dbReference>
<dbReference type="SABIO-RK" id="P34914"/>
<dbReference type="BioGRID-ORCS" id="13850">
    <property type="hits" value="1 hit in 79 CRISPR screens"/>
</dbReference>
<dbReference type="ChiTaRS" id="Ephx2">
    <property type="organism name" value="mouse"/>
</dbReference>
<dbReference type="EvolutionaryTrace" id="P34914"/>
<dbReference type="PRO" id="PR:P34914"/>
<dbReference type="Proteomes" id="UP000000589">
    <property type="component" value="Chromosome 14"/>
</dbReference>
<dbReference type="RNAct" id="P34914">
    <property type="molecule type" value="protein"/>
</dbReference>
<dbReference type="Bgee" id="ENSMUSG00000022040">
    <property type="expression patterns" value="Expressed in small intestine Peyer's patch and 237 other cell types or tissues"/>
</dbReference>
<dbReference type="ExpressionAtlas" id="P34914">
    <property type="expression patterns" value="baseline and differential"/>
</dbReference>
<dbReference type="GO" id="GO:0005829">
    <property type="term" value="C:cytosol"/>
    <property type="evidence" value="ECO:0007669"/>
    <property type="project" value="Ensembl"/>
</dbReference>
<dbReference type="GO" id="GO:0005777">
    <property type="term" value="C:peroxisome"/>
    <property type="evidence" value="ECO:0007669"/>
    <property type="project" value="UniProtKB-SubCell"/>
</dbReference>
<dbReference type="GO" id="GO:0033885">
    <property type="term" value="F:10-hydroxy-9-(phosphonooxy)octadecanoate phosphatase activity"/>
    <property type="evidence" value="ECO:0007669"/>
    <property type="project" value="UniProtKB-EC"/>
</dbReference>
<dbReference type="GO" id="GO:0004301">
    <property type="term" value="F:epoxide hydrolase activity"/>
    <property type="evidence" value="ECO:0000315"/>
    <property type="project" value="UniProtKB"/>
</dbReference>
<dbReference type="GO" id="GO:0042577">
    <property type="term" value="F:lipid phosphatase activity"/>
    <property type="evidence" value="ECO:0000250"/>
    <property type="project" value="UniProtKB"/>
</dbReference>
<dbReference type="GO" id="GO:0052642">
    <property type="term" value="F:lysophosphatidic acid phosphatase activity"/>
    <property type="evidence" value="ECO:0000250"/>
    <property type="project" value="UniProtKB"/>
</dbReference>
<dbReference type="GO" id="GO:0000287">
    <property type="term" value="F:magnesium ion binding"/>
    <property type="evidence" value="ECO:0000250"/>
    <property type="project" value="UniProtKB"/>
</dbReference>
<dbReference type="GO" id="GO:0042803">
    <property type="term" value="F:protein homodimerization activity"/>
    <property type="evidence" value="ECO:0007669"/>
    <property type="project" value="Ensembl"/>
</dbReference>
<dbReference type="GO" id="GO:0015643">
    <property type="term" value="F:toxic substance binding"/>
    <property type="evidence" value="ECO:0007669"/>
    <property type="project" value="Ensembl"/>
</dbReference>
<dbReference type="GO" id="GO:0042632">
    <property type="term" value="P:cholesterol homeostasis"/>
    <property type="evidence" value="ECO:0000314"/>
    <property type="project" value="UniProtKB"/>
</dbReference>
<dbReference type="GO" id="GO:0016311">
    <property type="term" value="P:dephosphorylation"/>
    <property type="evidence" value="ECO:0000250"/>
    <property type="project" value="UniProtKB"/>
</dbReference>
<dbReference type="GO" id="GO:0097176">
    <property type="term" value="P:epoxide metabolic process"/>
    <property type="evidence" value="ECO:0000315"/>
    <property type="project" value="UniProtKB"/>
</dbReference>
<dbReference type="GO" id="GO:0046839">
    <property type="term" value="P:phospholipid dephosphorylation"/>
    <property type="evidence" value="ECO:0000250"/>
    <property type="project" value="UniProtKB"/>
</dbReference>
<dbReference type="GO" id="GO:0010628">
    <property type="term" value="P:positive regulation of gene expression"/>
    <property type="evidence" value="ECO:0000314"/>
    <property type="project" value="UniProtKB"/>
</dbReference>
<dbReference type="GO" id="GO:0090181">
    <property type="term" value="P:regulation of cholesterol metabolic process"/>
    <property type="evidence" value="ECO:0000315"/>
    <property type="project" value="UniProtKB"/>
</dbReference>
<dbReference type="GO" id="GO:0009636">
    <property type="term" value="P:response to toxic substance"/>
    <property type="evidence" value="ECO:0007669"/>
    <property type="project" value="UniProtKB-KW"/>
</dbReference>
<dbReference type="GO" id="GO:0046272">
    <property type="term" value="P:stilbene catabolic process"/>
    <property type="evidence" value="ECO:0007669"/>
    <property type="project" value="Ensembl"/>
</dbReference>
<dbReference type="CDD" id="cd02603">
    <property type="entry name" value="HAD_sEH-N_like"/>
    <property type="match status" value="1"/>
</dbReference>
<dbReference type="FunFam" id="1.10.150.240:FF:000011">
    <property type="entry name" value="Bifunctional epoxide hydrolase 2"/>
    <property type="match status" value="1"/>
</dbReference>
<dbReference type="FunFam" id="3.40.50.1820:FF:000067">
    <property type="entry name" value="Bifunctional epoxide hydrolase 2"/>
    <property type="match status" value="1"/>
</dbReference>
<dbReference type="Gene3D" id="3.40.50.1820">
    <property type="entry name" value="alpha/beta hydrolase"/>
    <property type="match status" value="1"/>
</dbReference>
<dbReference type="Gene3D" id="3.40.50.1000">
    <property type="entry name" value="HAD superfamily/HAD-like"/>
    <property type="match status" value="1"/>
</dbReference>
<dbReference type="Gene3D" id="1.10.150.240">
    <property type="entry name" value="Putative phosphatase, domain 2"/>
    <property type="match status" value="1"/>
</dbReference>
<dbReference type="InterPro" id="IPR000073">
    <property type="entry name" value="AB_hydrolase_1"/>
</dbReference>
<dbReference type="InterPro" id="IPR029058">
    <property type="entry name" value="AB_hydrolase_fold"/>
</dbReference>
<dbReference type="InterPro" id="IPR000639">
    <property type="entry name" value="Epox_hydrolase-like"/>
</dbReference>
<dbReference type="InterPro" id="IPR036412">
    <property type="entry name" value="HAD-like_sf"/>
</dbReference>
<dbReference type="InterPro" id="IPR006439">
    <property type="entry name" value="HAD-SF_hydro_IA"/>
</dbReference>
<dbReference type="InterPro" id="IPR023214">
    <property type="entry name" value="HAD_sf"/>
</dbReference>
<dbReference type="InterPro" id="IPR023198">
    <property type="entry name" value="PGP-like_dom2"/>
</dbReference>
<dbReference type="NCBIfam" id="TIGR01509">
    <property type="entry name" value="HAD-SF-IA-v3"/>
    <property type="match status" value="1"/>
</dbReference>
<dbReference type="PANTHER" id="PTHR43329">
    <property type="entry name" value="EPOXIDE HYDROLASE"/>
    <property type="match status" value="1"/>
</dbReference>
<dbReference type="Pfam" id="PF00561">
    <property type="entry name" value="Abhydrolase_1"/>
    <property type="match status" value="1"/>
</dbReference>
<dbReference type="Pfam" id="PF00702">
    <property type="entry name" value="Hydrolase"/>
    <property type="match status" value="1"/>
</dbReference>
<dbReference type="PRINTS" id="PR00111">
    <property type="entry name" value="ABHYDROLASE"/>
</dbReference>
<dbReference type="PRINTS" id="PR00412">
    <property type="entry name" value="EPOXHYDRLASE"/>
</dbReference>
<dbReference type="SFLD" id="SFLDG01129">
    <property type="entry name" value="C1.5:_HAD__Beta-PGM__Phosphata"/>
    <property type="match status" value="1"/>
</dbReference>
<dbReference type="SFLD" id="SFLDF00040">
    <property type="entry name" value="epoxide_hydrolase_n-terminal_p"/>
    <property type="match status" value="1"/>
</dbReference>
<dbReference type="SUPFAM" id="SSF53474">
    <property type="entry name" value="alpha/beta-Hydrolases"/>
    <property type="match status" value="1"/>
</dbReference>
<dbReference type="SUPFAM" id="SSF56784">
    <property type="entry name" value="HAD-like"/>
    <property type="match status" value="1"/>
</dbReference>
<feature type="chain" id="PRO_0000084112" description="Bifunctional epoxide hydrolase 2">
    <location>
        <begin position="1"/>
        <end position="554"/>
    </location>
</feature>
<feature type="domain" description="AB hydrolase-1" evidence="4">
    <location>
        <begin position="257"/>
        <end position="530"/>
    </location>
</feature>
<feature type="region of interest" description="Phosphatase">
    <location>
        <begin position="1"/>
        <end position="224"/>
    </location>
</feature>
<feature type="region of interest" description="Epoxide hydrolase">
    <location>
        <begin position="233"/>
        <end position="554"/>
    </location>
</feature>
<feature type="short sequence motif" description="Microbody targeting signal" evidence="4">
    <location>
        <begin position="552"/>
        <end position="554"/>
    </location>
</feature>
<feature type="active site" description="Nucleophile" evidence="5 6">
    <location>
        <position position="333"/>
    </location>
</feature>
<feature type="active site" description="Proton donor" evidence="5 6">
    <location>
        <position position="465"/>
    </location>
</feature>
<feature type="active site" description="Proton acceptor" evidence="5 6">
    <location>
        <position position="523"/>
    </location>
</feature>
<feature type="binding site" evidence="2">
    <location>
        <position position="9"/>
    </location>
    <ligand>
        <name>Mg(2+)</name>
        <dbReference type="ChEBI" id="CHEBI:18420"/>
    </ligand>
</feature>
<feature type="binding site" evidence="2">
    <location>
        <position position="11"/>
    </location>
    <ligand>
        <name>Mg(2+)</name>
        <dbReference type="ChEBI" id="CHEBI:18420"/>
    </ligand>
</feature>
<feature type="binding site" evidence="2">
    <location>
        <begin position="123"/>
        <end position="124"/>
    </location>
    <ligand>
        <name>phosphate</name>
        <dbReference type="ChEBI" id="CHEBI:43474"/>
    </ligand>
</feature>
<feature type="binding site" evidence="2">
    <location>
        <position position="185"/>
    </location>
    <ligand>
        <name>Mg(2+)</name>
        <dbReference type="ChEBI" id="CHEBI:18420"/>
    </ligand>
</feature>
<feature type="binding site" evidence="2">
    <location>
        <position position="381"/>
    </location>
    <ligand>
        <name>substrate</name>
    </ligand>
</feature>
<feature type="modified residue" description="N6-succinyllysine" evidence="20">
    <location>
        <position position="55"/>
    </location>
</feature>
<feature type="modified residue" description="N6-acetyllysine; alternate" evidence="19">
    <location>
        <position position="176"/>
    </location>
</feature>
<feature type="modified residue" description="N6-succinyllysine; alternate" evidence="20">
    <location>
        <position position="176"/>
    </location>
</feature>
<feature type="modified residue" description="N6-acetyllysine" evidence="19">
    <location>
        <position position="191"/>
    </location>
</feature>
<feature type="modified residue" description="N6-acetyllysine" evidence="19">
    <location>
        <position position="215"/>
    </location>
</feature>
<feature type="modified residue" description="Phosphoserine" evidence="17 18">
    <location>
        <position position="368"/>
    </location>
</feature>
<feature type="modified residue" description="N6-succinyllysine" evidence="20">
    <location>
        <position position="371"/>
    </location>
</feature>
<feature type="modified residue" description="N6-succinyllysine" evidence="20">
    <location>
        <position position="420"/>
    </location>
</feature>
<feature type="modified residue" description="N6-succinyllysine" evidence="20">
    <location>
        <position position="454"/>
    </location>
</feature>
<feature type="modified residue" description="N6-succinyllysine" evidence="20">
    <location>
        <position position="504"/>
    </location>
</feature>
<feature type="modified residue" description="N6-acetyllysine; alternate" evidence="19">
    <location>
        <position position="508"/>
    </location>
</feature>
<feature type="modified residue" description="N6-succinyllysine; alternate" evidence="20">
    <location>
        <position position="508"/>
    </location>
</feature>
<feature type="modified residue" description="N6-succinyllysine" evidence="20">
    <location>
        <position position="553"/>
    </location>
</feature>
<feature type="lipid moiety-binding region" description="S-(15-deoxy-Delta12,14-prostaglandin J2-9-yl)cysteine" evidence="1">
    <location>
        <position position="521"/>
    </location>
</feature>
<feature type="splice variant" id="VSP_013904" description="In isoform 2." evidence="12">
    <original>MALRVAAFDLDGVLALPSIAGAFRRSEEALALPRDFLLGAYQTEFPEGPTEQLMKGKITFSQ</original>
    <variation>MRFAAMAAFSVFFVSKGLLMNSNIWCVGQEGPSQEDTDTIHTSE</variation>
    <location>
        <begin position="1"/>
        <end position="62"/>
    </location>
</feature>
<feature type="sequence conflict" description="In Ref. 2; CAA85471." evidence="14" ref="2">
    <original>A</original>
    <variation>T</variation>
    <location>
        <position position="77"/>
    </location>
</feature>
<feature type="strand" evidence="21">
    <location>
        <begin position="5"/>
        <end position="8"/>
    </location>
</feature>
<feature type="helix" evidence="22">
    <location>
        <begin position="10"/>
        <end position="12"/>
    </location>
</feature>
<feature type="strand" evidence="21">
    <location>
        <begin position="13"/>
        <end position="17"/>
    </location>
</feature>
<feature type="helix" evidence="21">
    <location>
        <begin position="20"/>
        <end position="28"/>
    </location>
</feature>
<feature type="turn" evidence="21">
    <location>
        <begin position="29"/>
        <end position="31"/>
    </location>
</feature>
<feature type="turn" evidence="21">
    <location>
        <begin position="34"/>
        <end position="37"/>
    </location>
</feature>
<feature type="helix" evidence="21">
    <location>
        <begin position="38"/>
        <end position="41"/>
    </location>
</feature>
<feature type="turn" evidence="21">
    <location>
        <begin position="51"/>
        <end position="56"/>
    </location>
</feature>
<feature type="strand" evidence="23">
    <location>
        <begin position="57"/>
        <end position="62"/>
    </location>
</feature>
<feature type="helix" evidence="21">
    <location>
        <begin position="64"/>
        <end position="74"/>
    </location>
</feature>
<feature type="turn" evidence="21">
    <location>
        <begin position="75"/>
        <end position="78"/>
    </location>
</feature>
<feature type="helix" evidence="21">
    <location>
        <begin position="94"/>
        <end position="97"/>
    </location>
</feature>
<feature type="helix" evidence="21">
    <location>
        <begin position="103"/>
        <end position="114"/>
    </location>
</feature>
<feature type="strand" evidence="21">
    <location>
        <begin position="118"/>
        <end position="123"/>
    </location>
</feature>
<feature type="strand" evidence="22">
    <location>
        <begin position="130"/>
        <end position="132"/>
    </location>
</feature>
<feature type="helix" evidence="21">
    <location>
        <begin position="134"/>
        <end position="143"/>
    </location>
</feature>
<feature type="helix" evidence="21">
    <location>
        <begin position="144"/>
        <end position="146"/>
    </location>
</feature>
<feature type="strand" evidence="21">
    <location>
        <begin position="148"/>
        <end position="152"/>
    </location>
</feature>
<feature type="helix" evidence="21">
    <location>
        <begin position="153"/>
        <end position="156"/>
    </location>
</feature>
<feature type="helix" evidence="21">
    <location>
        <begin position="163"/>
        <end position="173"/>
    </location>
</feature>
<feature type="strand" evidence="21">
    <location>
        <begin position="177"/>
        <end position="187"/>
    </location>
</feature>
<feature type="turn" evidence="21">
    <location>
        <begin position="188"/>
        <end position="190"/>
    </location>
</feature>
<feature type="helix" evidence="21">
    <location>
        <begin position="191"/>
        <end position="195"/>
    </location>
</feature>
<feature type="strand" evidence="21">
    <location>
        <begin position="199"/>
        <end position="202"/>
    </location>
</feature>
<feature type="strand" evidence="21">
    <location>
        <begin position="205"/>
        <end position="207"/>
    </location>
</feature>
<feature type="helix" evidence="21">
    <location>
        <begin position="208"/>
        <end position="215"/>
    </location>
</feature>
<feature type="strand" evidence="24">
    <location>
        <begin position="216"/>
        <end position="218"/>
    </location>
</feature>
<feature type="strand" evidence="21">
    <location>
        <begin position="232"/>
        <end position="241"/>
    </location>
</feature>
<feature type="strand" evidence="21">
    <location>
        <begin position="243"/>
        <end position="245"/>
    </location>
</feature>
<feature type="strand" evidence="21">
    <location>
        <begin position="247"/>
        <end position="254"/>
    </location>
</feature>
<feature type="strand" evidence="21">
    <location>
        <begin position="256"/>
        <end position="262"/>
    </location>
</feature>
<feature type="helix" evidence="21">
    <location>
        <begin position="269"/>
        <end position="274"/>
    </location>
</feature>
<feature type="helix" evidence="21">
    <location>
        <begin position="275"/>
        <end position="281"/>
    </location>
</feature>
<feature type="strand" evidence="21">
    <location>
        <begin position="285"/>
        <end position="290"/>
    </location>
</feature>
<feature type="helix" evidence="21">
    <location>
        <begin position="304"/>
        <end position="306"/>
    </location>
</feature>
<feature type="helix" evidence="21">
    <location>
        <begin position="308"/>
        <end position="322"/>
    </location>
</feature>
<feature type="strand" evidence="21">
    <location>
        <begin position="327"/>
        <end position="332"/>
    </location>
</feature>
<feature type="helix" evidence="21">
    <location>
        <begin position="334"/>
        <end position="345"/>
    </location>
</feature>
<feature type="turn" evidence="24">
    <location>
        <begin position="347"/>
        <end position="349"/>
    </location>
</feature>
<feature type="strand" evidence="21">
    <location>
        <begin position="350"/>
        <end position="357"/>
    </location>
</feature>
<feature type="helix" evidence="21">
    <location>
        <begin position="369"/>
        <end position="375"/>
    </location>
</feature>
<feature type="helix" evidence="21">
    <location>
        <begin position="377"/>
        <end position="379"/>
    </location>
</feature>
<feature type="helix" evidence="21">
    <location>
        <begin position="380"/>
        <end position="385"/>
    </location>
</feature>
<feature type="helix" evidence="21">
    <location>
        <begin position="390"/>
        <end position="397"/>
    </location>
</feature>
<feature type="helix" evidence="21">
    <location>
        <begin position="399"/>
        <end position="406"/>
    </location>
</feature>
<feature type="turn" evidence="21">
    <location>
        <begin position="418"/>
        <end position="420"/>
    </location>
</feature>
<feature type="helix" evidence="21">
    <location>
        <begin position="421"/>
        <end position="424"/>
    </location>
</feature>
<feature type="turn" evidence="21">
    <location>
        <begin position="427"/>
        <end position="430"/>
    </location>
</feature>
<feature type="strand" evidence="21">
    <location>
        <begin position="439"/>
        <end position="441"/>
    </location>
</feature>
<feature type="helix" evidence="21">
    <location>
        <begin position="443"/>
        <end position="456"/>
    </location>
</feature>
<feature type="helix" evidence="21">
    <location>
        <begin position="459"/>
        <end position="462"/>
    </location>
</feature>
<feature type="helix" evidence="21">
    <location>
        <begin position="463"/>
        <end position="467"/>
    </location>
</feature>
<feature type="helix" evidence="21">
    <location>
        <begin position="468"/>
        <end position="475"/>
    </location>
</feature>
<feature type="helix" evidence="21">
    <location>
        <begin position="476"/>
        <end position="478"/>
    </location>
</feature>
<feature type="strand" evidence="21">
    <location>
        <begin position="487"/>
        <end position="492"/>
    </location>
</feature>
<feature type="strand" evidence="21">
    <location>
        <begin position="496"/>
        <end position="498"/>
    </location>
</feature>
<feature type="helix" evidence="21">
    <location>
        <begin position="500"/>
        <end position="503"/>
    </location>
</feature>
<feature type="helix" evidence="21">
    <location>
        <begin position="506"/>
        <end position="508"/>
    </location>
</feature>
<feature type="strand" evidence="21">
    <location>
        <begin position="514"/>
        <end position="518"/>
    </location>
</feature>
<feature type="helix" evidence="21">
    <location>
        <begin position="525"/>
        <end position="528"/>
    </location>
</feature>
<feature type="helix" evidence="21">
    <location>
        <begin position="530"/>
        <end position="543"/>
    </location>
</feature>
<name>HYES_MOUSE</name>
<reference key="1">
    <citation type="journal article" date="1993" name="J. Biol. Chem.">
        <title>Molecular cloning and expression of murine liver soluble epoxide hydrolase.</title>
        <authorList>
            <person name="Grant D.F."/>
            <person name="Storms D.H."/>
            <person name="Hammock B.D."/>
        </authorList>
    </citation>
    <scope>NUCLEOTIDE SEQUENCE [MRNA] (ISOFORM 1)</scope>
    <scope>PARTIAL PROTEIN SEQUENCE</scope>
    <scope>INDUCTION</scope>
    <source>
        <tissue>Liver</tissue>
    </source>
</reference>
<reference key="2">
    <citation type="journal article" date="1995" name="Arch. Toxicol.">
        <title>Tissue specific basal expression of soluble murine epoxide hydrolase and effects of clofibrate on the mRNA levels in extrahepatic tissues and liver.</title>
        <authorList>
            <person name="Johansson C."/>
            <person name="Stark A."/>
            <person name="Sandberg M."/>
            <person name="Ek B."/>
            <person name="Rask L."/>
            <person name="Meijer J."/>
        </authorList>
    </citation>
    <scope>NUCLEOTIDE SEQUENCE [MRNA] (ISOFORM 1)</scope>
    <scope>TISSUE SPECIFICITY</scope>
    <scope>INDUCTION</scope>
    <source>
        <strain>NMRI</strain>
    </source>
</reference>
<reference key="3">
    <citation type="journal article" date="2005" name="Biol. Reprod.">
        <title>Identification and characterization of an ovary-selective isoform of epoxide hydrolase.</title>
        <authorList>
            <person name="Hennebold J.D."/>
            <person name="Mah K."/>
            <person name="Perez W."/>
            <person name="Vance J.E."/>
            <person name="Stouffer R.L."/>
            <person name="Morisseau C."/>
            <person name="Hammock B.D."/>
            <person name="Adashi E.Y."/>
        </authorList>
    </citation>
    <scope>NUCLEOTIDE SEQUENCE [MRNA] (ISOFORM 2)</scope>
    <scope>TISSUE SPECIFICITY</scope>
    <scope>INDUCTION</scope>
    <source>
        <strain>C57BL/6J</strain>
    </source>
</reference>
<reference key="4">
    <citation type="journal article" date="2004" name="Genome Res.">
        <title>The status, quality, and expansion of the NIH full-length cDNA project: the Mammalian Gene Collection (MGC).</title>
        <authorList>
            <consortium name="The MGC Project Team"/>
        </authorList>
    </citation>
    <scope>NUCLEOTIDE SEQUENCE [LARGE SCALE MRNA] (ISOFORM 1)</scope>
    <source>
        <strain>FVB/N</strain>
        <tissue>Colon</tissue>
    </source>
</reference>
<reference key="5">
    <citation type="journal article" date="1995" name="Arch. Biochem. Biophys.">
        <title>Metabolism of epoxyeicosatrienoic acids by cytosolic epoxide hydrolase: substrate structural determinants of asymmetric catalysis.</title>
        <authorList>
            <person name="Zeldin D.C."/>
            <person name="Wei S."/>
            <person name="Falck J.R."/>
            <person name="Hammock B.D."/>
            <person name="Snapper J.R."/>
            <person name="Capdevila J.H."/>
        </authorList>
    </citation>
    <scope>FUNCTION</scope>
    <scope>CATALYTIC ACTIVITY</scope>
    <scope>TISSUE SPECIFICITY</scope>
    <scope>SUBCELLULAR LOCATION</scope>
</reference>
<reference key="6">
    <citation type="journal article" date="2007" name="Proc. Natl. Acad. Sci. U.S.A.">
        <title>Large-scale phosphorylation analysis of mouse liver.</title>
        <authorList>
            <person name="Villen J."/>
            <person name="Beausoleil S.A."/>
            <person name="Gerber S.A."/>
            <person name="Gygi S.P."/>
        </authorList>
    </citation>
    <scope>PHOSPHORYLATION [LARGE SCALE ANALYSIS] AT SER-368</scope>
    <scope>IDENTIFICATION BY MASS SPECTROMETRY [LARGE SCALE ANALYSIS]</scope>
    <source>
        <tissue>Liver</tissue>
    </source>
</reference>
<reference key="7">
    <citation type="journal article" date="2010" name="Cell">
        <title>A tissue-specific atlas of mouse protein phosphorylation and expression.</title>
        <authorList>
            <person name="Huttlin E.L."/>
            <person name="Jedrychowski M.P."/>
            <person name="Elias J.E."/>
            <person name="Goswami T."/>
            <person name="Rad R."/>
            <person name="Beausoleil S.A."/>
            <person name="Villen J."/>
            <person name="Haas W."/>
            <person name="Sowa M.E."/>
            <person name="Gygi S.P."/>
        </authorList>
    </citation>
    <scope>PHOSPHORYLATION [LARGE SCALE ANALYSIS] AT SER-368</scope>
    <scope>IDENTIFICATION BY MASS SPECTROMETRY [LARGE SCALE ANALYSIS]</scope>
    <source>
        <tissue>Brain</tissue>
        <tissue>Brown adipose tissue</tissue>
        <tissue>Heart</tissue>
        <tissue>Kidney</tissue>
        <tissue>Liver</tissue>
        <tissue>Lung</tissue>
        <tissue>Spleen</tissue>
        <tissue>Testis</tissue>
    </source>
</reference>
<reference key="8">
    <citation type="journal article" date="2011" name="J. Lipid Res.">
        <title>Mammalian soluble epoxide hydrolase is identical to liver hepoxilin hydrolase.</title>
        <authorList>
            <person name="Cronin A."/>
            <person name="Decker M."/>
            <person name="Arand M."/>
        </authorList>
    </citation>
    <scope>FUNCTION</scope>
    <scope>DISRUPTION PHENOTYPE</scope>
    <scope>CATALYTIC ACTIVITY</scope>
    <scope>ACTIVITY REGULATION</scope>
    <scope>TISSUE SPECIFICITY</scope>
    <scope>SUBCELLULAR LOCATION</scope>
</reference>
<reference key="9">
    <citation type="journal article" date="2013" name="Mol. Cell">
        <title>SIRT5-mediated lysine desuccinylation impacts diverse metabolic pathways.</title>
        <authorList>
            <person name="Park J."/>
            <person name="Chen Y."/>
            <person name="Tishkoff D.X."/>
            <person name="Peng C."/>
            <person name="Tan M."/>
            <person name="Dai L."/>
            <person name="Xie Z."/>
            <person name="Zhang Y."/>
            <person name="Zwaans B.M."/>
            <person name="Skinner M.E."/>
            <person name="Lombard D.B."/>
            <person name="Zhao Y."/>
        </authorList>
    </citation>
    <scope>SUCCINYLATION [LARGE SCALE ANALYSIS] AT LYS-55; LYS-176; LYS-371; LYS-420; LYS-454; LYS-504; LYS-508 AND LYS-553</scope>
    <scope>IDENTIFICATION BY MASS SPECTROMETRY [LARGE SCALE ANALYSIS]</scope>
    <source>
        <tissue>Liver</tissue>
    </source>
</reference>
<reference key="10">
    <citation type="journal article" date="2013" name="Proc. Natl. Acad. Sci. U.S.A.">
        <title>Label-free quantitative proteomics of the lysine acetylome in mitochondria identifies substrates of SIRT3 in metabolic pathways.</title>
        <authorList>
            <person name="Rardin M.J."/>
            <person name="Newman J.C."/>
            <person name="Held J.M."/>
            <person name="Cusack M.P."/>
            <person name="Sorensen D.J."/>
            <person name="Li B."/>
            <person name="Schilling B."/>
            <person name="Mooney S.D."/>
            <person name="Kahn C.R."/>
            <person name="Verdin E."/>
            <person name="Gibson B.W."/>
        </authorList>
    </citation>
    <scope>ACETYLATION [LARGE SCALE ANALYSIS] AT LYS-176; LYS-191; LYS-215 AND LYS-508</scope>
    <scope>IDENTIFICATION BY MASS SPECTROMETRY [LARGE SCALE ANALYSIS]</scope>
    <source>
        <tissue>Liver</tissue>
    </source>
</reference>
<reference key="11">
    <citation type="journal article" date="1999" name="Proc. Natl. Acad. Sci. U.S.A.">
        <title>Detoxification of environmental mutagens and carcinogens: structure, mechanism, and evolution of liver epoxide hydrolase.</title>
        <authorList>
            <person name="Argiriadi M.A."/>
            <person name="Morisseau C."/>
            <person name="Hammock B.D."/>
            <person name="Christianson D.W."/>
        </authorList>
    </citation>
    <scope>X-RAY CRYSTALLOGRAPHY (2.8 ANGSTROMS)</scope>
    <scope>ACTIVE SITE</scope>
    <source>
        <tissue>Liver</tissue>
    </source>
</reference>
<reference key="12">
    <citation type="journal article" date="2000" name="J. Biol. Chem.">
        <title>Binding of alkylurea inhibitors to epoxide hydrolase implicates active site tyrosines in substrate activation.</title>
        <authorList>
            <person name="Argiriadi M.A."/>
            <person name="Morisseau C."/>
            <person name="Goodrow M.H."/>
            <person name="Dowdy D.L."/>
            <person name="Hammock B.D."/>
            <person name="Christianson D.W."/>
        </authorList>
    </citation>
    <scope>X-RAY CRYSTALLOGRAPHY (3.0 ANGSTROMS) IN COMPLEX WITH EPOXIDE HYDROLASE INHIBITOR</scope>
    <scope>ACTIVE SITE</scope>
</reference>
<organism>
    <name type="scientific">Mus musculus</name>
    <name type="common">Mouse</name>
    <dbReference type="NCBI Taxonomy" id="10090"/>
    <lineage>
        <taxon>Eukaryota</taxon>
        <taxon>Metazoa</taxon>
        <taxon>Chordata</taxon>
        <taxon>Craniata</taxon>
        <taxon>Vertebrata</taxon>
        <taxon>Euteleostomi</taxon>
        <taxon>Mammalia</taxon>
        <taxon>Eutheria</taxon>
        <taxon>Euarchontoglires</taxon>
        <taxon>Glires</taxon>
        <taxon>Rodentia</taxon>
        <taxon>Myomorpha</taxon>
        <taxon>Muroidea</taxon>
        <taxon>Muridae</taxon>
        <taxon>Murinae</taxon>
        <taxon>Mus</taxon>
        <taxon>Mus</taxon>
    </lineage>
</organism>